<protein>
    <recommendedName>
        <fullName>Probable leucine--tRNA ligase, mitochondrial</fullName>
        <ecNumber>6.1.1.4</ecNumber>
    </recommendedName>
    <alternativeName>
        <fullName>Leucyl-tRNA synthetase</fullName>
        <shortName>LeuRS</shortName>
    </alternativeName>
</protein>
<evidence type="ECO:0000250" key="1"/>
<evidence type="ECO:0000250" key="2">
    <source>
        <dbReference type="UniProtKB" id="Q15031"/>
    </source>
</evidence>
<evidence type="ECO:0000250" key="3">
    <source>
        <dbReference type="UniProtKB" id="Q8VDC0"/>
    </source>
</evidence>
<evidence type="ECO:0000255" key="4"/>
<evidence type="ECO:0000305" key="5"/>
<accession>Q5RDP4</accession>
<name>SYLM_PONAB</name>
<feature type="transit peptide" description="Mitochondrion" evidence="4">
    <location>
        <begin position="1"/>
        <end status="unknown"/>
    </location>
</feature>
<feature type="chain" id="PRO_0000229758" description="Probable leucine--tRNA ligase, mitochondrial">
    <location>
        <begin status="unknown"/>
        <end position="903"/>
    </location>
</feature>
<feature type="short sequence motif" description="'HIGH' region">
    <location>
        <begin position="92"/>
        <end position="102"/>
    </location>
</feature>
<feature type="short sequence motif" description="'KMSKS' region">
    <location>
        <begin position="639"/>
        <end position="643"/>
    </location>
</feature>
<feature type="binding site" evidence="1">
    <location>
        <position position="642"/>
    </location>
    <ligand>
        <name>ATP</name>
        <dbReference type="ChEBI" id="CHEBI:30616"/>
    </ligand>
</feature>
<feature type="modified residue" description="N6-acetyllysine" evidence="3">
    <location>
        <position position="68"/>
    </location>
</feature>
<feature type="modified residue" description="N6-acetyllysine" evidence="2">
    <location>
        <position position="236"/>
    </location>
</feature>
<feature type="modified residue" description="Phosphoserine" evidence="2">
    <location>
        <position position="711"/>
    </location>
</feature>
<gene>
    <name type="primary">LARS2</name>
</gene>
<dbReference type="EC" id="6.1.1.4"/>
<dbReference type="EMBL" id="CR857860">
    <property type="protein sequence ID" value="CAH90113.1"/>
    <property type="molecule type" value="mRNA"/>
</dbReference>
<dbReference type="RefSeq" id="NP_001127239.1">
    <property type="nucleotide sequence ID" value="NM_001133767.1"/>
</dbReference>
<dbReference type="SMR" id="Q5RDP4"/>
<dbReference type="FunCoup" id="Q5RDP4">
    <property type="interactions" value="1800"/>
</dbReference>
<dbReference type="STRING" id="9601.ENSPPYP00000015598"/>
<dbReference type="GeneID" id="100174294"/>
<dbReference type="KEGG" id="pon:100174294"/>
<dbReference type="CTD" id="23395"/>
<dbReference type="eggNOG" id="KOG0435">
    <property type="taxonomic scope" value="Eukaryota"/>
</dbReference>
<dbReference type="InParanoid" id="Q5RDP4"/>
<dbReference type="OrthoDB" id="15954at2759"/>
<dbReference type="Proteomes" id="UP000001595">
    <property type="component" value="Unplaced"/>
</dbReference>
<dbReference type="GO" id="GO:0005759">
    <property type="term" value="C:mitochondrial matrix"/>
    <property type="evidence" value="ECO:0007669"/>
    <property type="project" value="UniProtKB-SubCell"/>
</dbReference>
<dbReference type="GO" id="GO:0002161">
    <property type="term" value="F:aminoacyl-tRNA deacylase activity"/>
    <property type="evidence" value="ECO:0007669"/>
    <property type="project" value="InterPro"/>
</dbReference>
<dbReference type="GO" id="GO:0005524">
    <property type="term" value="F:ATP binding"/>
    <property type="evidence" value="ECO:0007669"/>
    <property type="project" value="UniProtKB-KW"/>
</dbReference>
<dbReference type="GO" id="GO:0004823">
    <property type="term" value="F:leucine-tRNA ligase activity"/>
    <property type="evidence" value="ECO:0007669"/>
    <property type="project" value="UniProtKB-EC"/>
</dbReference>
<dbReference type="GO" id="GO:0006429">
    <property type="term" value="P:leucyl-tRNA aminoacylation"/>
    <property type="evidence" value="ECO:0007669"/>
    <property type="project" value="InterPro"/>
</dbReference>
<dbReference type="GO" id="GO:0032543">
    <property type="term" value="P:mitochondrial translation"/>
    <property type="evidence" value="ECO:0007669"/>
    <property type="project" value="TreeGrafter"/>
</dbReference>
<dbReference type="CDD" id="cd07958">
    <property type="entry name" value="Anticodon_Ia_Leu_BEm"/>
    <property type="match status" value="1"/>
</dbReference>
<dbReference type="CDD" id="cd00812">
    <property type="entry name" value="LeuRS_core"/>
    <property type="match status" value="1"/>
</dbReference>
<dbReference type="FunFam" id="1.10.730.10:FF:000011">
    <property type="entry name" value="Leucine--tRNA ligase chloroplastic/mitochondrial"/>
    <property type="match status" value="1"/>
</dbReference>
<dbReference type="FunFam" id="3.40.50.620:FF:000612">
    <property type="entry name" value="Leucyl-tRNA synthetase 2, mitochondrial"/>
    <property type="match status" value="1"/>
</dbReference>
<dbReference type="FunFam" id="1.10.730.10:FF:000023">
    <property type="entry name" value="probable leucine--tRNA ligase, mitochondrial"/>
    <property type="match status" value="1"/>
</dbReference>
<dbReference type="FunFam" id="3.40.50.620:FF:000100">
    <property type="entry name" value="probable leucine--tRNA ligase, mitochondrial"/>
    <property type="match status" value="1"/>
</dbReference>
<dbReference type="Gene3D" id="3.40.50.620">
    <property type="entry name" value="HUPs"/>
    <property type="match status" value="2"/>
</dbReference>
<dbReference type="Gene3D" id="1.10.730.10">
    <property type="entry name" value="Isoleucyl-tRNA Synthetase, Domain 1"/>
    <property type="match status" value="2"/>
</dbReference>
<dbReference type="InterPro" id="IPR001412">
    <property type="entry name" value="aa-tRNA-synth_I_CS"/>
</dbReference>
<dbReference type="InterPro" id="IPR002300">
    <property type="entry name" value="aa-tRNA-synth_Ia"/>
</dbReference>
<dbReference type="InterPro" id="IPR002302">
    <property type="entry name" value="Leu-tRNA-ligase"/>
</dbReference>
<dbReference type="InterPro" id="IPR025709">
    <property type="entry name" value="Leu_tRNA-synth_edit"/>
</dbReference>
<dbReference type="InterPro" id="IPR013155">
    <property type="entry name" value="M/V/L/I-tRNA-synth_anticd-bd"/>
</dbReference>
<dbReference type="InterPro" id="IPR014729">
    <property type="entry name" value="Rossmann-like_a/b/a_fold"/>
</dbReference>
<dbReference type="InterPro" id="IPR009080">
    <property type="entry name" value="tRNAsynth_Ia_anticodon-bd"/>
</dbReference>
<dbReference type="InterPro" id="IPR009008">
    <property type="entry name" value="Val/Leu/Ile-tRNA-synth_edit"/>
</dbReference>
<dbReference type="NCBIfam" id="TIGR00396">
    <property type="entry name" value="leuS_bact"/>
    <property type="match status" value="1"/>
</dbReference>
<dbReference type="PANTHER" id="PTHR43740:SF2">
    <property type="entry name" value="LEUCINE--TRNA LIGASE, MITOCHONDRIAL"/>
    <property type="match status" value="1"/>
</dbReference>
<dbReference type="PANTHER" id="PTHR43740">
    <property type="entry name" value="LEUCYL-TRNA SYNTHETASE"/>
    <property type="match status" value="1"/>
</dbReference>
<dbReference type="Pfam" id="PF08264">
    <property type="entry name" value="Anticodon_1"/>
    <property type="match status" value="1"/>
</dbReference>
<dbReference type="Pfam" id="PF00133">
    <property type="entry name" value="tRNA-synt_1"/>
    <property type="match status" value="3"/>
</dbReference>
<dbReference type="Pfam" id="PF13603">
    <property type="entry name" value="tRNA-synt_1_2"/>
    <property type="match status" value="1"/>
</dbReference>
<dbReference type="PRINTS" id="PR00985">
    <property type="entry name" value="TRNASYNTHLEU"/>
</dbReference>
<dbReference type="SUPFAM" id="SSF47323">
    <property type="entry name" value="Anticodon-binding domain of a subclass of class I aminoacyl-tRNA synthetases"/>
    <property type="match status" value="1"/>
</dbReference>
<dbReference type="SUPFAM" id="SSF52374">
    <property type="entry name" value="Nucleotidylyl transferase"/>
    <property type="match status" value="1"/>
</dbReference>
<dbReference type="SUPFAM" id="SSF50677">
    <property type="entry name" value="ValRS/IleRS/LeuRS editing domain"/>
    <property type="match status" value="1"/>
</dbReference>
<dbReference type="PROSITE" id="PS00178">
    <property type="entry name" value="AA_TRNA_LIGASE_I"/>
    <property type="match status" value="1"/>
</dbReference>
<reference key="1">
    <citation type="submission" date="2004-11" db="EMBL/GenBank/DDBJ databases">
        <authorList>
            <consortium name="The German cDNA consortium"/>
        </authorList>
    </citation>
    <scope>NUCLEOTIDE SEQUENCE [LARGE SCALE MRNA]</scope>
    <source>
        <tissue>Kidney</tissue>
    </source>
</reference>
<comment type="catalytic activity">
    <reaction>
        <text>tRNA(Leu) + L-leucine + ATP = L-leucyl-tRNA(Leu) + AMP + diphosphate</text>
        <dbReference type="Rhea" id="RHEA:11688"/>
        <dbReference type="Rhea" id="RHEA-COMP:9613"/>
        <dbReference type="Rhea" id="RHEA-COMP:9622"/>
        <dbReference type="ChEBI" id="CHEBI:30616"/>
        <dbReference type="ChEBI" id="CHEBI:33019"/>
        <dbReference type="ChEBI" id="CHEBI:57427"/>
        <dbReference type="ChEBI" id="CHEBI:78442"/>
        <dbReference type="ChEBI" id="CHEBI:78494"/>
        <dbReference type="ChEBI" id="CHEBI:456215"/>
        <dbReference type="EC" id="6.1.1.4"/>
    </reaction>
</comment>
<comment type="subcellular location">
    <subcellularLocation>
        <location evidence="1">Mitochondrion matrix</location>
    </subcellularLocation>
</comment>
<comment type="similarity">
    <text evidence="5">Belongs to the class-I aminoacyl-tRNA synthetase family.</text>
</comment>
<keyword id="KW-0007">Acetylation</keyword>
<keyword id="KW-0030">Aminoacyl-tRNA synthetase</keyword>
<keyword id="KW-0067">ATP-binding</keyword>
<keyword id="KW-0436">Ligase</keyword>
<keyword id="KW-0496">Mitochondrion</keyword>
<keyword id="KW-0547">Nucleotide-binding</keyword>
<keyword id="KW-0597">Phosphoprotein</keyword>
<keyword id="KW-0648">Protein biosynthesis</keyword>
<keyword id="KW-1185">Reference proteome</keyword>
<keyword id="KW-0809">Transit peptide</keyword>
<proteinExistence type="evidence at transcript level"/>
<sequence length="903" mass="101941">MASVWQRLGFYASLLKRQLNGGPDVIKWERRVIPGCTRSIYSATGKWTKEYTLQTRKDVEKWWHQRIKEQASKISEADKSKPKFYVLSMFPYPSGKLHMGHVRVYTISDTIARFQKMRGMQVINPMGWDAFGLPAENAAVERNLHPESWTQSNIKHMRKQLDRLGLCFSWDREITTCLPDYYKWTQYLFIKLYEAGLAYQKEALVNWDPVDQTVLANEQVDEHGCSWRSGAKVEQKYLRQWFIKTTAYAKAMQDALADLPEWYGIKGMQAHWIGDCVGCHLDFTLKVHGQATGEKLTAYTATPEAIYGTSHVAISPSHRLLHGHSSLKEALRMALVPGKDCLTPVMAVNMLTQQEVPVVILAKADLEGSLDSKIGIPSTSSEDTILAQTLGLAYSEVIETLPDGTERLSSSAEFTGMTRQDAFLALTQKARGKRVGGDVTSDKLKDWLISRQRYWGTPIPIVHCPVCGPTPVPLEDLPVTLPNIASFTGKGGSPLAMASEWVNCSCPRCKGAAKRETDTMDTFVDSAWYYFRYTDPHNPHSPFNTAVADYWMPVDLYIGGKEHAVMHLFYARFFSHFCHDQKMVKHREPFHKLLAQGLIKGQTFRLPSGQYLQREEVDLTGSVPVHAKTKEKLEVTWEKMSKSKHNGVDPEEVVEQYGIDTIRLYILFAAPPEKDILWDVKTDALPGVLRWQQRLWTLTTRFIEARASGKSPQPQLLSNKEKAEARKLWEYKNSVISQVTTHFTEDFSLNSAISQLMGLSGALSQASQSVILHSPEFEDALCALMVMAAPMAPHVTSEIWAGLALVPRKLCAHYTWDVSVLLQAWPAVDPEFLQEPEVVQMAVLINNKACGKIPVPQQVARDQDKVHEFVLQSELGVRLLQGRSIKKSFLSPRTALINFPVQD</sequence>
<organism>
    <name type="scientific">Pongo abelii</name>
    <name type="common">Sumatran orangutan</name>
    <name type="synonym">Pongo pygmaeus abelii</name>
    <dbReference type="NCBI Taxonomy" id="9601"/>
    <lineage>
        <taxon>Eukaryota</taxon>
        <taxon>Metazoa</taxon>
        <taxon>Chordata</taxon>
        <taxon>Craniata</taxon>
        <taxon>Vertebrata</taxon>
        <taxon>Euteleostomi</taxon>
        <taxon>Mammalia</taxon>
        <taxon>Eutheria</taxon>
        <taxon>Euarchontoglires</taxon>
        <taxon>Primates</taxon>
        <taxon>Haplorrhini</taxon>
        <taxon>Catarrhini</taxon>
        <taxon>Hominidae</taxon>
        <taxon>Pongo</taxon>
    </lineage>
</organism>